<proteinExistence type="evidence at transcript level"/>
<name>HN1BB_DANRE</name>
<keyword id="KW-0010">Activator</keyword>
<keyword id="KW-0217">Developmental protein</keyword>
<keyword id="KW-0238">DNA-binding</keyword>
<keyword id="KW-0371">Homeobox</keyword>
<keyword id="KW-0539">Nucleus</keyword>
<keyword id="KW-1185">Reference proteome</keyword>
<keyword id="KW-0804">Transcription</keyword>
<keyword id="KW-0805">Transcription regulation</keyword>
<sequence length="532" mass="58320">MFTDMVSKLTSLQQELLSALLDSGVTKDVLVQALEDLCPCPAEFGIKIEKPLSPSSANGGSDCGDSKPVFLTLTGAQGKGGKLSGDEGSEDGDDFDTPPILRELQSLNTEEAAEQRAEVDRMLSEDPWRVARTIKGYMQQHNIPQREVVDVTGLNQSHLSQHLNKGTPMKTAKRAALYTWYVQKQREIDRQFDRVQGSDPSDSASQDQVLFFFPEFNHGGHSSGAAGGSGAAVGDEGEPGSKRMRRNRFKWGPASQEILYQAYERQKNPSKEEREALVEECNRAECVQRGVSPSKAHGLGSNLVTEVRVYNWFANRRKEEAFRQKLAMDTYTPHMNPLLSHTASLSHHHSSESKLRYSQQAASEVTSSTTISHPSVLQQVSPGGLDHCHGLLSTDAKMISVSGGVLPPVSTLTNIHSLSQSSHHHHHHHHQQAQSLIMSLAAQSLTSPQSQSVPVINSVSGLTTLQPMQFPQSSSLTQLTTAHISQQPFAQSHMYSPKQEAGQFSHPSRYSTMDSSTITHLGSSKQCPLQAW</sequence>
<accession>Q8UW00</accession>
<feature type="chain" id="PRO_0000389524" description="Hepatocyte nuclear factor 1-beta-B">
    <location>
        <begin position="1"/>
        <end position="532"/>
    </location>
</feature>
<feature type="domain" description="HNF-p1" evidence="6">
    <location>
        <begin position="5"/>
        <end position="36"/>
    </location>
</feature>
<feature type="domain" description="POU-specific atypical" evidence="5">
    <location>
        <begin position="102"/>
        <end position="197"/>
    </location>
</feature>
<feature type="DNA-binding region" description="Homeobox; HNF1-type" evidence="4">
    <location>
        <begin position="244"/>
        <end position="324"/>
    </location>
</feature>
<feature type="region of interest" description="Dimerization" evidence="1">
    <location>
        <begin position="1"/>
        <end position="35"/>
    </location>
</feature>
<feature type="region of interest" description="Disordered" evidence="7">
    <location>
        <begin position="74"/>
        <end position="95"/>
    </location>
</feature>
<feature type="region of interest" description="Disordered" evidence="7">
    <location>
        <begin position="222"/>
        <end position="245"/>
    </location>
</feature>
<feature type="region of interest" description="Disordered" evidence="7">
    <location>
        <begin position="500"/>
        <end position="532"/>
    </location>
</feature>
<feature type="compositionally biased region" description="Gly residues" evidence="7">
    <location>
        <begin position="222"/>
        <end position="231"/>
    </location>
</feature>
<feature type="compositionally biased region" description="Polar residues" evidence="7">
    <location>
        <begin position="505"/>
        <end position="532"/>
    </location>
</feature>
<dbReference type="EMBL" id="AF250352">
    <property type="protein sequence ID" value="AAL48194.1"/>
    <property type="molecule type" value="mRNA"/>
</dbReference>
<dbReference type="RefSeq" id="NP_919353.1">
    <property type="nucleotide sequence ID" value="NM_194372.3"/>
</dbReference>
<dbReference type="SMR" id="Q8UW00"/>
<dbReference type="STRING" id="7955.ENSDARP00000143259"/>
<dbReference type="PaxDb" id="7955-ENSDARP00000038789"/>
<dbReference type="Ensembl" id="ENSDART00000177616">
    <property type="protein sequence ID" value="ENSDARP00000143259"/>
    <property type="gene ID" value="ENSDARG00000022295"/>
</dbReference>
<dbReference type="GeneID" id="324283"/>
<dbReference type="KEGG" id="dre:324283"/>
<dbReference type="AGR" id="ZFIN:ZDB-GENE-030131-3003"/>
<dbReference type="CTD" id="324283"/>
<dbReference type="ZFIN" id="ZDB-GENE-030131-3003">
    <property type="gene designation" value="hnf1bb"/>
</dbReference>
<dbReference type="eggNOG" id="ENOG502QRPW">
    <property type="taxonomic scope" value="Eukaryota"/>
</dbReference>
<dbReference type="InParanoid" id="Q8UW00"/>
<dbReference type="OMA" id="QFPHSSG"/>
<dbReference type="OrthoDB" id="10069265at2759"/>
<dbReference type="PhylomeDB" id="Q8UW00"/>
<dbReference type="PRO" id="PR:Q8UW00"/>
<dbReference type="Proteomes" id="UP000000437">
    <property type="component" value="Chromosome 21"/>
</dbReference>
<dbReference type="Bgee" id="ENSDARG00000022295">
    <property type="expression patterns" value="Expressed in mesonephros and 24 other cell types or tissues"/>
</dbReference>
<dbReference type="ExpressionAtlas" id="Q8UW00">
    <property type="expression patterns" value="baseline and differential"/>
</dbReference>
<dbReference type="GO" id="GO:0005634">
    <property type="term" value="C:nucleus"/>
    <property type="evidence" value="ECO:0000318"/>
    <property type="project" value="GO_Central"/>
</dbReference>
<dbReference type="GO" id="GO:0000981">
    <property type="term" value="F:DNA-binding transcription factor activity, RNA polymerase II-specific"/>
    <property type="evidence" value="ECO:0000318"/>
    <property type="project" value="GO_Central"/>
</dbReference>
<dbReference type="GO" id="GO:0000978">
    <property type="term" value="F:RNA polymerase II cis-regulatory region sequence-specific DNA binding"/>
    <property type="evidence" value="ECO:0000318"/>
    <property type="project" value="GO_Central"/>
</dbReference>
<dbReference type="GO" id="GO:0034672">
    <property type="term" value="P:anterior/posterior pattern specification involved in pronephros development"/>
    <property type="evidence" value="ECO:0000316"/>
    <property type="project" value="ZFIN"/>
</dbReference>
<dbReference type="GO" id="GO:0030073">
    <property type="term" value="P:insulin secretion"/>
    <property type="evidence" value="ECO:0007669"/>
    <property type="project" value="InterPro"/>
</dbReference>
<dbReference type="GO" id="GO:0001889">
    <property type="term" value="P:liver development"/>
    <property type="evidence" value="ECO:0007669"/>
    <property type="project" value="InterPro"/>
</dbReference>
<dbReference type="GO" id="GO:0031016">
    <property type="term" value="P:pancreas development"/>
    <property type="evidence" value="ECO:0007669"/>
    <property type="project" value="InterPro"/>
</dbReference>
<dbReference type="GO" id="GO:0045893">
    <property type="term" value="P:positive regulation of DNA-templated transcription"/>
    <property type="evidence" value="ECO:0007669"/>
    <property type="project" value="InterPro"/>
</dbReference>
<dbReference type="GO" id="GO:0006357">
    <property type="term" value="P:regulation of transcription by RNA polymerase II"/>
    <property type="evidence" value="ECO:0000318"/>
    <property type="project" value="GO_Central"/>
</dbReference>
<dbReference type="CDD" id="cd00086">
    <property type="entry name" value="homeodomain"/>
    <property type="match status" value="1"/>
</dbReference>
<dbReference type="FunFam" id="1.10.10.60:FF:000043">
    <property type="entry name" value="Hepatocyte nuclear factor 1-beta"/>
    <property type="match status" value="1"/>
</dbReference>
<dbReference type="FunFam" id="1.10.260.40:FF:000009">
    <property type="entry name" value="Hepatocyte nuclear factor 1-beta"/>
    <property type="match status" value="1"/>
</dbReference>
<dbReference type="Gene3D" id="1.10.10.60">
    <property type="entry name" value="Homeodomain-like"/>
    <property type="match status" value="1"/>
</dbReference>
<dbReference type="Gene3D" id="1.10.260.40">
    <property type="entry name" value="lambda repressor-like DNA-binding domains"/>
    <property type="match status" value="1"/>
</dbReference>
<dbReference type="InterPro" id="IPR001356">
    <property type="entry name" value="HD"/>
</dbReference>
<dbReference type="InterPro" id="IPR039066">
    <property type="entry name" value="HNF-1"/>
</dbReference>
<dbReference type="InterPro" id="IPR006899">
    <property type="entry name" value="HNF-1_N"/>
</dbReference>
<dbReference type="InterPro" id="IPR044869">
    <property type="entry name" value="HNF-1_POU"/>
</dbReference>
<dbReference type="InterPro" id="IPR023219">
    <property type="entry name" value="HNF1_dimer_N_dom_sf"/>
</dbReference>
<dbReference type="InterPro" id="IPR006897">
    <property type="entry name" value="HNF1b_C"/>
</dbReference>
<dbReference type="InterPro" id="IPR044866">
    <property type="entry name" value="HNF_P1"/>
</dbReference>
<dbReference type="InterPro" id="IPR009057">
    <property type="entry name" value="Homeodomain-like_sf"/>
</dbReference>
<dbReference type="InterPro" id="IPR010982">
    <property type="entry name" value="Lambda_DNA-bd_dom_sf"/>
</dbReference>
<dbReference type="PANTHER" id="PTHR11568">
    <property type="entry name" value="HEPATOCYTE NUCLEAR FACTOR 1"/>
    <property type="match status" value="1"/>
</dbReference>
<dbReference type="PANTHER" id="PTHR11568:SF2">
    <property type="entry name" value="HEPATOCYTE NUCLEAR FACTOR 1-BETA"/>
    <property type="match status" value="1"/>
</dbReference>
<dbReference type="Pfam" id="PF04814">
    <property type="entry name" value="HNF-1_N"/>
    <property type="match status" value="1"/>
</dbReference>
<dbReference type="Pfam" id="PF04812">
    <property type="entry name" value="HNF-1B_C"/>
    <property type="match status" value="1"/>
</dbReference>
<dbReference type="SMART" id="SM00389">
    <property type="entry name" value="HOX"/>
    <property type="match status" value="1"/>
</dbReference>
<dbReference type="SUPFAM" id="SSF100957">
    <property type="entry name" value="Dimerization cofactor of HNF-1 alpha"/>
    <property type="match status" value="1"/>
</dbReference>
<dbReference type="SUPFAM" id="SSF46689">
    <property type="entry name" value="Homeodomain-like"/>
    <property type="match status" value="1"/>
</dbReference>
<dbReference type="SUPFAM" id="SSF47413">
    <property type="entry name" value="lambda repressor-like DNA-binding domains"/>
    <property type="match status" value="1"/>
</dbReference>
<dbReference type="PROSITE" id="PS51937">
    <property type="entry name" value="HNF_P1"/>
    <property type="match status" value="1"/>
</dbReference>
<dbReference type="PROSITE" id="PS00027">
    <property type="entry name" value="HOMEOBOX_1"/>
    <property type="match status" value="1"/>
</dbReference>
<dbReference type="PROSITE" id="PS50071">
    <property type="entry name" value="HOMEOBOX_2"/>
    <property type="match status" value="1"/>
</dbReference>
<dbReference type="PROSITE" id="PS51936">
    <property type="entry name" value="POU_4"/>
    <property type="match status" value="1"/>
</dbReference>
<gene>
    <name evidence="13" type="primary">hnf1bb</name>
    <name evidence="9" type="synonym">hnf1bl</name>
    <name evidence="10" type="synonym">hnf1g</name>
</gene>
<reference evidence="12" key="1">
    <citation type="submission" date="2000-03" db="EMBL/GenBank/DDBJ databases">
        <title>Developmental expression of HNF1g, a novel hepatocyte nuclear factor 1, and HNF1b homolog in zebrafish pronephros formation.</title>
        <authorList>
            <person name="Gong H.-Y."/>
            <person name="Hu M.-C."/>
            <person name="Lin C.J.-F."/>
            <person name="Chen M.C."/>
            <person name="Chen M.H.-C."/>
            <person name="Weng C.F."/>
            <person name="Wu J.-L."/>
        </authorList>
    </citation>
    <scope>NUCLEOTIDE SEQUENCE [MRNA]</scope>
    <source>
        <tissue evidence="12">Embryo</tissue>
    </source>
</reference>
<reference evidence="11" key="2">
    <citation type="journal article" date="2008" name="Zebrafish">
        <title>hnf1b genes in zebrafish hindbrain development.</title>
        <authorList>
            <person name="Choe S.-K."/>
            <person name="Hirsch N."/>
            <person name="Zhang X."/>
            <person name="Sagerstrom C.G."/>
        </authorList>
    </citation>
    <scope>FUNCTION</scope>
    <scope>TISSUE SPECIFICITY</scope>
</reference>
<protein>
    <recommendedName>
        <fullName evidence="2">Hepatocyte nuclear factor 1-beta-B</fullName>
        <shortName evidence="2">HNF-1-beta-B</shortName>
        <shortName evidence="2">HNF-1B-B</shortName>
    </recommendedName>
    <alternativeName>
        <fullName evidence="9">Hepatocyte nuclear factor 1-beta-like</fullName>
    </alternativeName>
    <alternativeName>
        <fullName evidence="10">Hepatocyte nuclear factor 1-gamma</fullName>
        <shortName evidence="10">HNF1g</shortName>
    </alternativeName>
</protein>
<comment type="function">
    <text evidence="2 8">Transcription factor that binds to the inverted palindrome 5'-GTTAATNATTAAC-3' (By similarity). Acts downstream of hnf1ba but is not required for induction of rhombomere r5/r6 gene expression in the hindbrain.</text>
</comment>
<comment type="subunit">
    <text evidence="2">Binds DNA as a dimer. Can form homodimer or heterodimer with HNF1-alpha (By similarity).</text>
</comment>
<comment type="subcellular location">
    <subcellularLocation>
        <location evidence="2 4">Nucleus</location>
    </subcellularLocation>
</comment>
<comment type="tissue specificity">
    <text evidence="8">First expressed at stage 10 in the intermediate mesoderm. Expressed in rhombomere r5 by 14 hpf with expression diminishing by 18 hpf.</text>
</comment>
<comment type="similarity">
    <text evidence="3">Belongs to the HNF1 homeobox family.</text>
</comment>
<comment type="caution">
    <text evidence="11">It is uncertain whether Met-1 or Met-5 is the initiator.</text>
</comment>
<organism>
    <name type="scientific">Danio rerio</name>
    <name type="common">Zebrafish</name>
    <name type="synonym">Brachydanio rerio</name>
    <dbReference type="NCBI Taxonomy" id="7955"/>
    <lineage>
        <taxon>Eukaryota</taxon>
        <taxon>Metazoa</taxon>
        <taxon>Chordata</taxon>
        <taxon>Craniata</taxon>
        <taxon>Vertebrata</taxon>
        <taxon>Euteleostomi</taxon>
        <taxon>Actinopterygii</taxon>
        <taxon>Neopterygii</taxon>
        <taxon>Teleostei</taxon>
        <taxon>Ostariophysi</taxon>
        <taxon>Cypriniformes</taxon>
        <taxon>Danionidae</taxon>
        <taxon>Danioninae</taxon>
        <taxon>Danio</taxon>
    </lineage>
</organism>
<evidence type="ECO:0000250" key="1">
    <source>
        <dbReference type="UniProtKB" id="P15257"/>
    </source>
</evidence>
<evidence type="ECO:0000250" key="2">
    <source>
        <dbReference type="UniProtKB" id="P35680"/>
    </source>
</evidence>
<evidence type="ECO:0000255" key="3"/>
<evidence type="ECO:0000255" key="4">
    <source>
        <dbReference type="PROSITE-ProRule" id="PRU00108"/>
    </source>
</evidence>
<evidence type="ECO:0000255" key="5">
    <source>
        <dbReference type="PROSITE-ProRule" id="PRU01285"/>
    </source>
</evidence>
<evidence type="ECO:0000255" key="6">
    <source>
        <dbReference type="PROSITE-ProRule" id="PRU01286"/>
    </source>
</evidence>
<evidence type="ECO:0000256" key="7">
    <source>
        <dbReference type="SAM" id="MobiDB-lite"/>
    </source>
</evidence>
<evidence type="ECO:0000269" key="8">
    <source>
    </source>
</evidence>
<evidence type="ECO:0000303" key="9">
    <source>
    </source>
</evidence>
<evidence type="ECO:0000303" key="10">
    <source ref="1"/>
</evidence>
<evidence type="ECO:0000305" key="11"/>
<evidence type="ECO:0000312" key="12">
    <source>
        <dbReference type="EMBL" id="AAL48194.1"/>
    </source>
</evidence>
<evidence type="ECO:0000312" key="13">
    <source>
        <dbReference type="ZFIN" id="ZDB-GENE-030131-3003"/>
    </source>
</evidence>